<accession>Q47R19</accession>
<sequence length="233" mass="23157">MAAPIAVALDAPDVETASRWAAAVAPHVSTLKVGLELYLRYGPAVVEAVRGARETALFLDLKLHDIPATVAGAARSVAGLAPAFLTVHAAGGADMVRAAVEAAPETRIAAVTVLTSLDEAALGAVGMRGPARDAVRRLAVLAVEAGARALVCSPQEAAMVRAEVGPDVTLITPGVRPAGAAQGDQARVATPEAALAAGADLLVIGRPITRAPDPGAAAAALAAELQKTGASPS</sequence>
<gene>
    <name evidence="1" type="primary">pyrF</name>
    <name type="ordered locus">Tfu_1060</name>
</gene>
<proteinExistence type="inferred from homology"/>
<comment type="function">
    <text evidence="1">Catalyzes the decarboxylation of orotidine 5'-monophosphate (OMP) to uridine 5'-monophosphate (UMP).</text>
</comment>
<comment type="catalytic activity">
    <reaction evidence="1">
        <text>orotidine 5'-phosphate + H(+) = UMP + CO2</text>
        <dbReference type="Rhea" id="RHEA:11596"/>
        <dbReference type="ChEBI" id="CHEBI:15378"/>
        <dbReference type="ChEBI" id="CHEBI:16526"/>
        <dbReference type="ChEBI" id="CHEBI:57538"/>
        <dbReference type="ChEBI" id="CHEBI:57865"/>
        <dbReference type="EC" id="4.1.1.23"/>
    </reaction>
</comment>
<comment type="pathway">
    <text evidence="1">Pyrimidine metabolism; UMP biosynthesis via de novo pathway; UMP from orotate: step 2/2.</text>
</comment>
<comment type="subunit">
    <text evidence="1">Homodimer.</text>
</comment>
<comment type="similarity">
    <text evidence="1">Belongs to the OMP decarboxylase family. Type 1 subfamily.</text>
</comment>
<protein>
    <recommendedName>
        <fullName evidence="1">Orotidine 5'-phosphate decarboxylase</fullName>
        <ecNumber evidence="1">4.1.1.23</ecNumber>
    </recommendedName>
    <alternativeName>
        <fullName evidence="1">OMP decarboxylase</fullName>
        <shortName evidence="1">OMPDCase</shortName>
        <shortName evidence="1">OMPdecase</shortName>
    </alternativeName>
</protein>
<keyword id="KW-0210">Decarboxylase</keyword>
<keyword id="KW-0456">Lyase</keyword>
<keyword id="KW-0665">Pyrimidine biosynthesis</keyword>
<reference key="1">
    <citation type="journal article" date="2007" name="J. Bacteriol.">
        <title>Genome sequence and analysis of the soil cellulolytic actinomycete Thermobifida fusca YX.</title>
        <authorList>
            <person name="Lykidis A."/>
            <person name="Mavromatis K."/>
            <person name="Ivanova N."/>
            <person name="Anderson I."/>
            <person name="Land M."/>
            <person name="DiBartolo G."/>
            <person name="Martinez M."/>
            <person name="Lapidus A."/>
            <person name="Lucas S."/>
            <person name="Copeland A."/>
            <person name="Richardson P."/>
            <person name="Wilson D.B."/>
            <person name="Kyrpides N."/>
        </authorList>
    </citation>
    <scope>NUCLEOTIDE SEQUENCE [LARGE SCALE GENOMIC DNA]</scope>
    <source>
        <strain>YX</strain>
    </source>
</reference>
<organism>
    <name type="scientific">Thermobifida fusca (strain YX)</name>
    <dbReference type="NCBI Taxonomy" id="269800"/>
    <lineage>
        <taxon>Bacteria</taxon>
        <taxon>Bacillati</taxon>
        <taxon>Actinomycetota</taxon>
        <taxon>Actinomycetes</taxon>
        <taxon>Streptosporangiales</taxon>
        <taxon>Nocardiopsidaceae</taxon>
        <taxon>Thermobifida</taxon>
    </lineage>
</organism>
<name>PYRF_THEFY</name>
<evidence type="ECO:0000255" key="1">
    <source>
        <dbReference type="HAMAP-Rule" id="MF_01200"/>
    </source>
</evidence>
<feature type="chain" id="PRO_0000241924" description="Orotidine 5'-phosphate decarboxylase">
    <location>
        <begin position="1"/>
        <end position="233"/>
    </location>
</feature>
<feature type="active site" description="Proton donor" evidence="1">
    <location>
        <position position="62"/>
    </location>
</feature>
<feature type="binding site" evidence="1">
    <location>
        <position position="10"/>
    </location>
    <ligand>
        <name>substrate</name>
    </ligand>
</feature>
<feature type="binding site" evidence="1">
    <location>
        <position position="32"/>
    </location>
    <ligand>
        <name>substrate</name>
    </ligand>
</feature>
<feature type="binding site" evidence="1">
    <location>
        <begin position="60"/>
        <end position="69"/>
    </location>
    <ligand>
        <name>substrate</name>
    </ligand>
</feature>
<feature type="binding site" evidence="1">
    <location>
        <position position="115"/>
    </location>
    <ligand>
        <name>substrate</name>
    </ligand>
</feature>
<feature type="binding site" evidence="1">
    <location>
        <position position="176"/>
    </location>
    <ligand>
        <name>substrate</name>
    </ligand>
</feature>
<feature type="binding site" evidence="1">
    <location>
        <position position="185"/>
    </location>
    <ligand>
        <name>substrate</name>
    </ligand>
</feature>
<feature type="binding site" evidence="1">
    <location>
        <position position="205"/>
    </location>
    <ligand>
        <name>substrate</name>
    </ligand>
</feature>
<feature type="binding site" evidence="1">
    <location>
        <position position="206"/>
    </location>
    <ligand>
        <name>substrate</name>
    </ligand>
</feature>
<dbReference type="EC" id="4.1.1.23" evidence="1"/>
<dbReference type="EMBL" id="CP000088">
    <property type="protein sequence ID" value="AAZ55098.1"/>
    <property type="molecule type" value="Genomic_DNA"/>
</dbReference>
<dbReference type="RefSeq" id="WP_011291507.1">
    <property type="nucleotide sequence ID" value="NC_007333.1"/>
</dbReference>
<dbReference type="SMR" id="Q47R19"/>
<dbReference type="STRING" id="269800.Tfu_1060"/>
<dbReference type="KEGG" id="tfu:Tfu_1060"/>
<dbReference type="eggNOG" id="COG0284">
    <property type="taxonomic scope" value="Bacteria"/>
</dbReference>
<dbReference type="HOGENOM" id="CLU_067069_1_0_11"/>
<dbReference type="OrthoDB" id="9806203at2"/>
<dbReference type="UniPathway" id="UPA00070">
    <property type="reaction ID" value="UER00120"/>
</dbReference>
<dbReference type="GO" id="GO:0005829">
    <property type="term" value="C:cytosol"/>
    <property type="evidence" value="ECO:0007669"/>
    <property type="project" value="TreeGrafter"/>
</dbReference>
<dbReference type="GO" id="GO:0004590">
    <property type="term" value="F:orotidine-5'-phosphate decarboxylase activity"/>
    <property type="evidence" value="ECO:0007669"/>
    <property type="project" value="UniProtKB-UniRule"/>
</dbReference>
<dbReference type="GO" id="GO:0006207">
    <property type="term" value="P:'de novo' pyrimidine nucleobase biosynthetic process"/>
    <property type="evidence" value="ECO:0007669"/>
    <property type="project" value="InterPro"/>
</dbReference>
<dbReference type="GO" id="GO:0044205">
    <property type="term" value="P:'de novo' UMP biosynthetic process"/>
    <property type="evidence" value="ECO:0007669"/>
    <property type="project" value="UniProtKB-UniRule"/>
</dbReference>
<dbReference type="CDD" id="cd04725">
    <property type="entry name" value="OMP_decarboxylase_like"/>
    <property type="match status" value="1"/>
</dbReference>
<dbReference type="Gene3D" id="3.20.20.70">
    <property type="entry name" value="Aldolase class I"/>
    <property type="match status" value="1"/>
</dbReference>
<dbReference type="HAMAP" id="MF_01200_B">
    <property type="entry name" value="OMPdecase_type1_B"/>
    <property type="match status" value="1"/>
</dbReference>
<dbReference type="InterPro" id="IPR013785">
    <property type="entry name" value="Aldolase_TIM"/>
</dbReference>
<dbReference type="InterPro" id="IPR014732">
    <property type="entry name" value="OMPdecase"/>
</dbReference>
<dbReference type="InterPro" id="IPR018089">
    <property type="entry name" value="OMPdecase_AS"/>
</dbReference>
<dbReference type="InterPro" id="IPR047596">
    <property type="entry name" value="OMPdecase_bac"/>
</dbReference>
<dbReference type="InterPro" id="IPR001754">
    <property type="entry name" value="OMPdeCOase_dom"/>
</dbReference>
<dbReference type="InterPro" id="IPR011060">
    <property type="entry name" value="RibuloseP-bd_barrel"/>
</dbReference>
<dbReference type="NCBIfam" id="NF001273">
    <property type="entry name" value="PRK00230.1"/>
    <property type="match status" value="1"/>
</dbReference>
<dbReference type="NCBIfam" id="TIGR01740">
    <property type="entry name" value="pyrF"/>
    <property type="match status" value="1"/>
</dbReference>
<dbReference type="PANTHER" id="PTHR32119">
    <property type="entry name" value="OROTIDINE 5'-PHOSPHATE DECARBOXYLASE"/>
    <property type="match status" value="1"/>
</dbReference>
<dbReference type="PANTHER" id="PTHR32119:SF2">
    <property type="entry name" value="OROTIDINE 5'-PHOSPHATE DECARBOXYLASE"/>
    <property type="match status" value="1"/>
</dbReference>
<dbReference type="Pfam" id="PF00215">
    <property type="entry name" value="OMPdecase"/>
    <property type="match status" value="1"/>
</dbReference>
<dbReference type="SMART" id="SM00934">
    <property type="entry name" value="OMPdecase"/>
    <property type="match status" value="1"/>
</dbReference>
<dbReference type="SUPFAM" id="SSF51366">
    <property type="entry name" value="Ribulose-phoshate binding barrel"/>
    <property type="match status" value="1"/>
</dbReference>
<dbReference type="PROSITE" id="PS00156">
    <property type="entry name" value="OMPDECASE"/>
    <property type="match status" value="1"/>
</dbReference>